<keyword id="KW-0066">ATP synthesis</keyword>
<keyword id="KW-0138">CF(0)</keyword>
<keyword id="KW-0150">Chloroplast</keyword>
<keyword id="KW-0375">Hydrogen ion transport</keyword>
<keyword id="KW-0406">Ion transport</keyword>
<keyword id="KW-0472">Membrane</keyword>
<keyword id="KW-0934">Plastid</keyword>
<keyword id="KW-1185">Reference proteome</keyword>
<keyword id="KW-0793">Thylakoid</keyword>
<keyword id="KW-0812">Transmembrane</keyword>
<keyword id="KW-1133">Transmembrane helix</keyword>
<keyword id="KW-0813">Transport</keyword>
<feature type="chain" id="PRO_0000277456" description="ATP synthase subunit a, chloroplastic">
    <location>
        <begin position="1"/>
        <end position="247"/>
    </location>
</feature>
<feature type="transmembrane region" description="Helical" evidence="1">
    <location>
        <begin position="38"/>
        <end position="58"/>
    </location>
</feature>
<feature type="transmembrane region" description="Helical" evidence="1">
    <location>
        <begin position="95"/>
        <end position="115"/>
    </location>
</feature>
<feature type="transmembrane region" description="Helical" evidence="1">
    <location>
        <begin position="134"/>
        <end position="154"/>
    </location>
</feature>
<feature type="transmembrane region" description="Helical" evidence="1">
    <location>
        <begin position="199"/>
        <end position="219"/>
    </location>
</feature>
<feature type="transmembrane region" description="Helical" evidence="1">
    <location>
        <begin position="220"/>
        <end position="240"/>
    </location>
</feature>
<organism>
    <name type="scientific">Glycine max</name>
    <name type="common">Soybean</name>
    <name type="synonym">Glycine hispida</name>
    <dbReference type="NCBI Taxonomy" id="3847"/>
    <lineage>
        <taxon>Eukaryota</taxon>
        <taxon>Viridiplantae</taxon>
        <taxon>Streptophyta</taxon>
        <taxon>Embryophyta</taxon>
        <taxon>Tracheophyta</taxon>
        <taxon>Spermatophyta</taxon>
        <taxon>Magnoliopsida</taxon>
        <taxon>eudicotyledons</taxon>
        <taxon>Gunneridae</taxon>
        <taxon>Pentapetalae</taxon>
        <taxon>rosids</taxon>
        <taxon>fabids</taxon>
        <taxon>Fabales</taxon>
        <taxon>Fabaceae</taxon>
        <taxon>Papilionoideae</taxon>
        <taxon>50 kb inversion clade</taxon>
        <taxon>NPAAA clade</taxon>
        <taxon>indigoferoid/millettioid clade</taxon>
        <taxon>Phaseoleae</taxon>
        <taxon>Glycine</taxon>
        <taxon>Glycine subgen. Soja</taxon>
    </lineage>
</organism>
<comment type="function">
    <text evidence="1">Key component of the proton channel; it plays a direct role in the translocation of protons across the membrane.</text>
</comment>
<comment type="subunit">
    <text evidence="1">F-type ATPases have 2 components, CF(1) - the catalytic core - and CF(0) - the membrane proton channel. CF(1) has five subunits: alpha(3), beta(3), gamma(1), delta(1), epsilon(1). CF(0) has four main subunits: a, b, b' and c.</text>
</comment>
<comment type="subcellular location">
    <subcellularLocation>
        <location evidence="1">Plastid</location>
        <location evidence="1">Chloroplast thylakoid membrane</location>
        <topology evidence="1">Multi-pass membrane protein</topology>
    </subcellularLocation>
</comment>
<comment type="similarity">
    <text evidence="1">Belongs to the ATPase A chain family.</text>
</comment>
<name>ATPI_SOYBN</name>
<proteinExistence type="inferred from homology"/>
<accession>Q2PMT1</accession>
<reference key="1">
    <citation type="journal article" date="2005" name="Plant Mol. Biol.">
        <title>Complete chloroplast genome sequence of Glycine max and comparative analyses with other legume genomes.</title>
        <authorList>
            <person name="Saski C."/>
            <person name="Lee S.-B."/>
            <person name="Daniell H."/>
            <person name="Wood T.C."/>
            <person name="Tomkins J."/>
            <person name="Kim H.-G."/>
            <person name="Jansen R.K."/>
        </authorList>
    </citation>
    <scope>NUCLEOTIDE SEQUENCE [LARGE SCALE GENOMIC DNA]</scope>
    <source>
        <strain>cv. PI 437654</strain>
    </source>
</reference>
<gene>
    <name evidence="1" type="primary">atpI</name>
</gene>
<protein>
    <recommendedName>
        <fullName evidence="1">ATP synthase subunit a, chloroplastic</fullName>
    </recommendedName>
    <alternativeName>
        <fullName evidence="1">ATP synthase F0 sector subunit a</fullName>
    </alternativeName>
    <alternativeName>
        <fullName evidence="1">F-ATPase subunit IV</fullName>
    </alternativeName>
</protein>
<sequence length="247" mass="27459">MNVLLCSINTLKRLYDISAVEVGQHFYWQIGSFQVHAQVLITSWVVIALLLVSAILIIRNLQTIPAFGQNFFEYVLEFIRDVSKTQIGEEYGPWVPFIGTLFLFIFVSNWSGALLPWKIIQLPHGELAAPTNDINTTVALALLTSIAYFYAGLSKKGLAYFNKYIQPTPILLPINILEDFTKPLSLSFRLFGNILADELVVVVLVSLVPLVVPIPVMFLGLFTSGIQALIFATLAAAYIGESMEGHH</sequence>
<evidence type="ECO:0000255" key="1">
    <source>
        <dbReference type="HAMAP-Rule" id="MF_01393"/>
    </source>
</evidence>
<geneLocation type="chloroplast"/>
<dbReference type="EMBL" id="DQ317523">
    <property type="protein sequence ID" value="ABC25127.1"/>
    <property type="molecule type" value="Genomic_DNA"/>
</dbReference>
<dbReference type="RefSeq" id="YP_538767.1">
    <property type="nucleotide sequence ID" value="NC_007942.1"/>
</dbReference>
<dbReference type="SMR" id="Q2PMT1"/>
<dbReference type="FunCoup" id="Q2PMT1">
    <property type="interactions" value="210"/>
</dbReference>
<dbReference type="STRING" id="3847.Q2PMT1"/>
<dbReference type="PaxDb" id="3847-GLYMA12G10235.1"/>
<dbReference type="GeneID" id="3989295"/>
<dbReference type="KEGG" id="gmx:3989295"/>
<dbReference type="eggNOG" id="KOG4665">
    <property type="taxonomic scope" value="Eukaryota"/>
</dbReference>
<dbReference type="InParanoid" id="Q2PMT1"/>
<dbReference type="Proteomes" id="UP000008827">
    <property type="component" value="Chloroplast"/>
</dbReference>
<dbReference type="GO" id="GO:0009535">
    <property type="term" value="C:chloroplast thylakoid membrane"/>
    <property type="evidence" value="ECO:0007669"/>
    <property type="project" value="UniProtKB-SubCell"/>
</dbReference>
<dbReference type="GO" id="GO:0005886">
    <property type="term" value="C:plasma membrane"/>
    <property type="evidence" value="ECO:0007669"/>
    <property type="project" value="UniProtKB-UniRule"/>
</dbReference>
<dbReference type="GO" id="GO:0045259">
    <property type="term" value="C:proton-transporting ATP synthase complex"/>
    <property type="evidence" value="ECO:0007669"/>
    <property type="project" value="UniProtKB-KW"/>
</dbReference>
<dbReference type="GO" id="GO:0046933">
    <property type="term" value="F:proton-transporting ATP synthase activity, rotational mechanism"/>
    <property type="evidence" value="ECO:0007669"/>
    <property type="project" value="UniProtKB-UniRule"/>
</dbReference>
<dbReference type="CDD" id="cd00310">
    <property type="entry name" value="ATP-synt_Fo_a_6"/>
    <property type="match status" value="1"/>
</dbReference>
<dbReference type="FunFam" id="1.20.120.220:FF:000001">
    <property type="entry name" value="ATP synthase subunit a, chloroplastic"/>
    <property type="match status" value="1"/>
</dbReference>
<dbReference type="Gene3D" id="1.20.120.220">
    <property type="entry name" value="ATP synthase, F0 complex, subunit A"/>
    <property type="match status" value="1"/>
</dbReference>
<dbReference type="HAMAP" id="MF_01393">
    <property type="entry name" value="ATP_synth_a_bact"/>
    <property type="match status" value="1"/>
</dbReference>
<dbReference type="InterPro" id="IPR045082">
    <property type="entry name" value="ATP_syn_F0_a_bact/chloroplast"/>
</dbReference>
<dbReference type="InterPro" id="IPR000568">
    <property type="entry name" value="ATP_synth_F0_asu"/>
</dbReference>
<dbReference type="InterPro" id="IPR023011">
    <property type="entry name" value="ATP_synth_F0_asu_AS"/>
</dbReference>
<dbReference type="InterPro" id="IPR035908">
    <property type="entry name" value="F0_ATP_A_sf"/>
</dbReference>
<dbReference type="NCBIfam" id="TIGR01131">
    <property type="entry name" value="ATP_synt_6_or_A"/>
    <property type="match status" value="1"/>
</dbReference>
<dbReference type="PANTHER" id="PTHR42823">
    <property type="entry name" value="ATP SYNTHASE SUBUNIT A, CHLOROPLASTIC"/>
    <property type="match status" value="1"/>
</dbReference>
<dbReference type="PANTHER" id="PTHR42823:SF3">
    <property type="entry name" value="ATP SYNTHASE SUBUNIT A, CHLOROPLASTIC"/>
    <property type="match status" value="1"/>
</dbReference>
<dbReference type="Pfam" id="PF00119">
    <property type="entry name" value="ATP-synt_A"/>
    <property type="match status" value="1"/>
</dbReference>
<dbReference type="PRINTS" id="PR00123">
    <property type="entry name" value="ATPASEA"/>
</dbReference>
<dbReference type="SUPFAM" id="SSF81336">
    <property type="entry name" value="F1F0 ATP synthase subunit A"/>
    <property type="match status" value="1"/>
</dbReference>
<dbReference type="PROSITE" id="PS00449">
    <property type="entry name" value="ATPASE_A"/>
    <property type="match status" value="1"/>
</dbReference>